<accession>A0A0H3C3S1</accession>
<evidence type="ECO:0000269" key="1">
    <source>
    </source>
</evidence>
<evidence type="ECO:0000269" key="2">
    <source>
    </source>
</evidence>
<evidence type="ECO:0000303" key="3">
    <source>
    </source>
</evidence>
<evidence type="ECO:0000305" key="4"/>
<evidence type="ECO:0000312" key="5">
    <source>
        <dbReference type="EMBL" id="ACL93566.1"/>
    </source>
</evidence>
<name>FZLC_CAUVN</name>
<reference key="1">
    <citation type="journal article" date="2010" name="J. Bacteriol.">
        <title>The genetic basis of laboratory adaptation in Caulobacter crescentus.</title>
        <authorList>
            <person name="Marks M.E."/>
            <person name="Castro-Rojas C.M."/>
            <person name="Teiling C."/>
            <person name="Du L."/>
            <person name="Kapatral V."/>
            <person name="Walunas T.L."/>
            <person name="Crosson S."/>
        </authorList>
    </citation>
    <scope>NUCLEOTIDE SEQUENCE [LARGE SCALE GENOMIC DNA]</scope>
    <source>
        <strain>NA1000 / CB15N</strain>
    </source>
</reference>
<reference key="2">
    <citation type="journal article" date="2010" name="Mol. Cell">
        <title>Imaging-based identification of a critical regulator of FtsZ protofilament curvature in Caulobacter.</title>
        <authorList>
            <person name="Goley E.D."/>
            <person name="Dye N.A."/>
            <person name="Werner J.N."/>
            <person name="Gitai Z."/>
            <person name="Shapiro L."/>
        </authorList>
    </citation>
    <scope>INTERACTION WITH FTSZ</scope>
    <scope>SUBCELLULAR LOCATION</scope>
    <scope>DISRUPTION PHENOTYPE</scope>
    <source>
        <strain>NA1000 / CB15N</strain>
    </source>
</reference>
<reference key="3">
    <citation type="journal article" date="2016" name="Mol. Microbiol.">
        <title>A novel membrane anchor for FtsZ is linked to cell wall hydrolysis in Caulobacter crescentus.</title>
        <authorList>
            <person name="Meier E.L."/>
            <person name="Razavi S."/>
            <person name="Inoue T."/>
            <person name="Goley E.D."/>
        </authorList>
    </citation>
    <scope>FUNCTION</scope>
    <scope>INTERACTION WITH FTSZ</scope>
    <scope>SUBCELLULAR LOCATION</scope>
    <scope>DISRUPTION PHENOTYPE</scope>
    <source>
        <strain>NA1000 / CB15N</strain>
    </source>
</reference>
<protein>
    <recommendedName>
        <fullName evidence="3">FtsZ-localized protein C</fullName>
    </recommendedName>
    <alternativeName>
        <fullName evidence="4">FtsZ-binding protein FzlC</fullName>
    </alternativeName>
</protein>
<dbReference type="EMBL" id="CP001340">
    <property type="protein sequence ID" value="ACL93566.1"/>
    <property type="molecule type" value="Genomic_DNA"/>
</dbReference>
<dbReference type="RefSeq" id="WP_010917989.1">
    <property type="nucleotide sequence ID" value="NC_011916.1"/>
</dbReference>
<dbReference type="RefSeq" id="YP_002515474.1">
    <property type="nucleotide sequence ID" value="NC_011916.1"/>
</dbReference>
<dbReference type="SMR" id="A0A0H3C3S1"/>
<dbReference type="GeneID" id="7332353"/>
<dbReference type="KEGG" id="ccs:CCNA_00099"/>
<dbReference type="PATRIC" id="fig|565050.3.peg.98"/>
<dbReference type="HOGENOM" id="CLU_025266_0_0_5"/>
<dbReference type="OrthoDB" id="9787373at2"/>
<dbReference type="PhylomeDB" id="A0A0H3C3S1"/>
<dbReference type="Proteomes" id="UP000001364">
    <property type="component" value="Chromosome"/>
</dbReference>
<dbReference type="GO" id="GO:0005737">
    <property type="term" value="C:cytoplasm"/>
    <property type="evidence" value="ECO:0007669"/>
    <property type="project" value="UniProtKB-SubCell"/>
</dbReference>
<dbReference type="GO" id="GO:0005886">
    <property type="term" value="C:plasma membrane"/>
    <property type="evidence" value="ECO:0007669"/>
    <property type="project" value="UniProtKB-SubCell"/>
</dbReference>
<dbReference type="GO" id="GO:0016829">
    <property type="term" value="F:lyase activity"/>
    <property type="evidence" value="ECO:0007669"/>
    <property type="project" value="InterPro"/>
</dbReference>
<dbReference type="GO" id="GO:0051301">
    <property type="term" value="P:cell division"/>
    <property type="evidence" value="ECO:0007669"/>
    <property type="project" value="UniProtKB-KW"/>
</dbReference>
<dbReference type="Gene3D" id="1.50.10.100">
    <property type="entry name" value="Chondroitin AC/alginate lyase"/>
    <property type="match status" value="1"/>
</dbReference>
<dbReference type="InterPro" id="IPR008929">
    <property type="entry name" value="Chondroitin_lyas"/>
</dbReference>
<dbReference type="InterPro" id="IPR012480">
    <property type="entry name" value="Hepar_II_III_C"/>
</dbReference>
<dbReference type="Pfam" id="PF07940">
    <property type="entry name" value="Hepar_II_III_C"/>
    <property type="match status" value="1"/>
</dbReference>
<gene>
    <name evidence="3" type="primary">fzlC</name>
    <name evidence="5" type="ordered locus">CCNA_00099</name>
</gene>
<keyword id="KW-0131">Cell cycle</keyword>
<keyword id="KW-0132">Cell division</keyword>
<keyword id="KW-0997">Cell inner membrane</keyword>
<keyword id="KW-1003">Cell membrane</keyword>
<keyword id="KW-0963">Cytoplasm</keyword>
<keyword id="KW-0472">Membrane</keyword>
<keyword id="KW-1185">Reference proteome</keyword>
<proteinExistence type="evidence at protein level"/>
<organism>
    <name type="scientific">Caulobacter vibrioides (strain NA1000 / CB15N)</name>
    <name type="common">Caulobacter crescentus</name>
    <dbReference type="NCBI Taxonomy" id="565050"/>
    <lineage>
        <taxon>Bacteria</taxon>
        <taxon>Pseudomonadati</taxon>
        <taxon>Pseudomonadota</taxon>
        <taxon>Alphaproteobacteria</taxon>
        <taxon>Caulobacterales</taxon>
        <taxon>Caulobacteraceae</taxon>
        <taxon>Caulobacter</taxon>
    </lineage>
</organism>
<comment type="function">
    <text evidence="2">Membrane anchor for FtsZ. Binds and recruits FtsZ polymers to membranes early in the cell cycle. May also improve the efficiency of cytokinesis through the regulation of cell wall hydrolysis.</text>
</comment>
<comment type="subunit">
    <text evidence="1 2">Interacts with FtsZ filaments.</text>
</comment>
<comment type="subcellular location">
    <subcellularLocation>
        <location evidence="2">Cytoplasm</location>
    </subcellularLocation>
    <subcellularLocation>
        <location evidence="2">Cell inner membrane</location>
    </subcellularLocation>
    <text evidence="1 2">Associates with membranes directly (PubMed:27028265). Colocalizes with FtsZ at the division site (PubMed:20864042).</text>
</comment>
<comment type="disruption phenotype">
    <text evidence="1 2">Deletion mutant grows with normal rates, morphology and Z-ring organization (PubMed:20864042, PubMed:27028265). In cells lacking other non-essential division genes implicated in cell wall hydrolysis, such as dipM, ftsE or amiC, deletion of fzlC causes synthetic cytokinesis defects (PubMed:27028265).</text>
</comment>
<feature type="chain" id="PRO_0000444997" description="FtsZ-localized protein C">
    <location>
        <begin position="1"/>
        <end position="576"/>
    </location>
</feature>
<sequence>MAGKPPVLGLAFPARLRGGVLWKAIRAEAAGHVEREWFGSGPHRLKIALPRPEGLSARPHDPRPVDPAHGQKILSGALTLDGGALRLGVDGDPFDTASPSRRFAVSLHRFDWLPDLVAVGPDGARRALRLIDDWRRVFGKWNAFSWGPECLERRVHHLACAAKTLAAEASDAEVADLVFDLARQGRHLLEITRAPERTLERAVAAGLAGCVLAGKPGEPLIDAALKALVPQLDAMVLGDGGHATRSPEAGVELLFDLLTLDDALGQRGRPSPEALSRAIDRLSSATRFFILGDGHLAAFHGGETVGPARIAAALAHDDAGPRSLNAAPHSGYHKMIGGSIEVIADCGPPPVGPLSVNACAQPAAFEIVCAKDRLITSCGWSPEAAGAHAFRLSDAASTVSVADGSAGRPLSGFRAKALGPWLVDGAAKVEAKRHDDVGGVWLDIVHDGWRHLGLTHARRLFLDAVQDELRGEDSLSPLALDPKAAEGPRRYLPFAVRFHLHPDARASIARDGKSVLIRGPSNIGWWLRNDAVDVEIAPSAHFDHGLARKAGQIVLKSQVRPEVGAKIRWKLTKAEG</sequence>